<evidence type="ECO:0000250" key="1">
    <source>
        <dbReference type="UniProtKB" id="Q04431"/>
    </source>
</evidence>
<evidence type="ECO:0000255" key="2"/>
<evidence type="ECO:0000305" key="3"/>
<accession>B5VH51</accession>
<organism>
    <name type="scientific">Saccharomyces cerevisiae (strain AWRI1631)</name>
    <name type="common">Baker's yeast</name>
    <dbReference type="NCBI Taxonomy" id="545124"/>
    <lineage>
        <taxon>Eukaryota</taxon>
        <taxon>Fungi</taxon>
        <taxon>Dikarya</taxon>
        <taxon>Ascomycota</taxon>
        <taxon>Saccharomycotina</taxon>
        <taxon>Saccharomycetes</taxon>
        <taxon>Saccharomycetales</taxon>
        <taxon>Saccharomycetaceae</taxon>
        <taxon>Saccharomyces</taxon>
    </lineage>
</organism>
<keyword id="KW-0137">Centromere</keyword>
<keyword id="KW-0158">Chromosome</keyword>
<keyword id="KW-0175">Coiled coil</keyword>
<keyword id="KW-0995">Kinetochore</keyword>
<keyword id="KW-0539">Nucleus</keyword>
<protein>
    <recommendedName>
        <fullName evidence="3">Outer kinetochore KNL1 complex subunit KRE28</fullName>
    </recommendedName>
    <alternativeName>
        <fullName>Spindle pole body component KRE28</fullName>
    </alternativeName>
</protein>
<comment type="function">
    <text evidence="1">Acts as a component of the outer kinetochore KNL1 complex that facilitates microtubule-kinetochore interactions and the spindle assembly checkpoint. Kinetochores, consisting of a centromere-associated inner segment and a microtubule-contacting outer segment, play a crucial role in chromosome segregation by mediating the physical connection between centromeric DNA and spindle microtubules. The outer kinetochore is made up of the ten-subunit KMN network, comprising the MIS12, NDC80 and KNL1 complexes, and auxiliary microtubule-associated components; together they connect the outer kinetochore with the inner kinetochore, bind microtubules, and mediate interactions with mitotic checkpoint proteins that delay anaphase until chromosomes are bioriented on the spindle. The KNL1 complex is required for kinetochore binding by the kMAPs (kinetochore-bound microtubule-associated proteins) BIM1, BIK1 and SLK19, and motors CIN8 and KAR3. Required during meiosis.</text>
</comment>
<comment type="subunit">
    <text evidence="1">Component of the KNL1/SPC105 complex composed of SPC105 and KRE28. Part of the ten-subunit outer kinetochore KMN network that includes the KNL1, MIS12 and NDC80 complexes. Interacts with the MIS12 complex subunits MTW1 (via C-terminus) and NSL1 (via C-terminus). Interacts with the NDC80 complex subunits SPC24 and SPC25. Interacts with CNN1 (via N-terminus).</text>
</comment>
<comment type="subcellular location">
    <subcellularLocation>
        <location evidence="1">Nucleus</location>
    </subcellularLocation>
    <subcellularLocation>
        <location evidence="1">Chromosome</location>
        <location evidence="1">Centromere</location>
        <location evidence="1">Kinetochore</location>
    </subcellularLocation>
</comment>
<comment type="similarity">
    <text evidence="3">Belongs to the KRE28 family.</text>
</comment>
<sequence>MDTGSASIKDYETVLTDIEDSIAVSSEEVLNNQELRLKNTLHEITSSILAINEENKFVNPLRNDESLDVEGKEVFVNPKILSAKIKEFNKLMELLKLTYLEQETLDYFFRFTLSSTKPLQLDSEKDPQFVKLNERVNDLKEEISNVQESKIEQIKAEIQETGHNFAEKQDLINELYLEATGDIENCWDSLNELKNLTNKEDKNMMGEKDTILNSSDSDDFVEETYTNWQKLLFLQKQNQRLTKELKEMHEVKNQIIRKGEQSKKEDSGHLMANESELCQSINLLTKFWEKHFLLKGSKTTILNFEIFTQLGKVQFEIKDMQYIIAISLSDLKRPMIKDITILQKAGGNIVTDIEANSKFNNKYRNNTKVQIFEVMDDIISELTNE</sequence>
<gene>
    <name type="primary">KRE28</name>
    <name type="ORF">AWRI1631_47430</name>
</gene>
<proteinExistence type="inferred from homology"/>
<reference key="1">
    <citation type="journal article" date="2008" name="FEMS Yeast Res.">
        <title>Comparative genome analysis of a Saccharomyces cerevisiae wine strain.</title>
        <authorList>
            <person name="Borneman A.R."/>
            <person name="Forgan A.H."/>
            <person name="Pretorius I.S."/>
            <person name="Chambers P.J."/>
        </authorList>
    </citation>
    <scope>NUCLEOTIDE SEQUENCE [LARGE SCALE GENOMIC DNA]</scope>
    <source>
        <strain>AWRI1631</strain>
    </source>
</reference>
<feature type="chain" id="PRO_0000408567" description="Outer kinetochore KNL1 complex subunit KRE28">
    <location>
        <begin position="1"/>
        <end position="385"/>
    </location>
</feature>
<feature type="coiled-coil region" evidence="2">
    <location>
        <begin position="128"/>
        <end position="175"/>
    </location>
</feature>
<feature type="coiled-coil region" evidence="2">
    <location>
        <begin position="229"/>
        <end position="258"/>
    </location>
</feature>
<dbReference type="EMBL" id="ABSV01000608">
    <property type="protein sequence ID" value="EDZ72746.1"/>
    <property type="molecule type" value="Genomic_DNA"/>
</dbReference>
<dbReference type="SMR" id="B5VH51"/>
<dbReference type="Proteomes" id="UP000008988">
    <property type="component" value="Unassembled WGS sequence"/>
</dbReference>
<dbReference type="GO" id="GO:0000776">
    <property type="term" value="C:kinetochore"/>
    <property type="evidence" value="ECO:0000250"/>
    <property type="project" value="UniProtKB"/>
</dbReference>
<dbReference type="GO" id="GO:0180019">
    <property type="term" value="C:Knl1/Spc105 complex"/>
    <property type="evidence" value="ECO:0000250"/>
    <property type="project" value="UniProtKB"/>
</dbReference>
<dbReference type="GO" id="GO:0005634">
    <property type="term" value="C:nucleus"/>
    <property type="evidence" value="ECO:0007669"/>
    <property type="project" value="UniProtKB-SubCell"/>
</dbReference>
<dbReference type="GO" id="GO:0031619">
    <property type="term" value="P:homologous chromosome orientation in meiotic metaphase I"/>
    <property type="evidence" value="ECO:0000250"/>
    <property type="project" value="UniProtKB"/>
</dbReference>
<dbReference type="GO" id="GO:1905325">
    <property type="term" value="P:regulation of meiosis I spindle assembly checkpoint"/>
    <property type="evidence" value="ECO:0000250"/>
    <property type="project" value="UniProtKB"/>
</dbReference>
<dbReference type="InterPro" id="IPR031361">
    <property type="entry name" value="Kre28"/>
</dbReference>
<dbReference type="Pfam" id="PF17097">
    <property type="entry name" value="Kre28"/>
    <property type="match status" value="1"/>
</dbReference>
<name>ZWINT_YEAS6</name>